<accession>Q3ZBW4</accession>
<feature type="chain" id="PRO_0000284917" description="Proliferating cell nuclear antigen">
    <location>
        <begin position="1"/>
        <end position="261"/>
    </location>
</feature>
<feature type="DNA-binding region" evidence="4">
    <location>
        <begin position="61"/>
        <end position="80"/>
    </location>
</feature>
<feature type="modified residue" description="N6-acetyllysine" evidence="2">
    <location>
        <position position="14"/>
    </location>
</feature>
<feature type="modified residue" description="N6-acetyllysine" evidence="2">
    <location>
        <position position="77"/>
    </location>
</feature>
<feature type="modified residue" description="N6-acetyllysine" evidence="2">
    <location>
        <position position="80"/>
    </location>
</feature>
<feature type="modified residue" description="Phosphotyrosine; by EGFR" evidence="2">
    <location>
        <position position="211"/>
    </location>
</feature>
<feature type="modified residue" description="N6-acetyllysine" evidence="2">
    <location>
        <position position="248"/>
    </location>
</feature>
<feature type="disulfide bond" evidence="2">
    <location>
        <begin position="135"/>
        <end position="162"/>
    </location>
</feature>
<feature type="cross-link" description="Glycyl lysine isopeptide (Lys-Gly) (interchain with G-Cter in SUMO2); alternate" evidence="2">
    <location>
        <position position="164"/>
    </location>
</feature>
<feature type="cross-link" description="Glycyl lysine isopeptide (Lys-Gly) (interchain with G-Cter in ubiquitin); alternate" evidence="2">
    <location>
        <position position="164"/>
    </location>
</feature>
<feature type="cross-link" description="Glycyl lysine isopeptide (Lys-Gly) (interchain with G-Cter in SUMO2)" evidence="2">
    <location>
        <position position="254"/>
    </location>
</feature>
<keyword id="KW-0007">Acetylation</keyword>
<keyword id="KW-1015">Disulfide bond</keyword>
<keyword id="KW-0227">DNA damage</keyword>
<keyword id="KW-0234">DNA repair</keyword>
<keyword id="KW-0235">DNA replication</keyword>
<keyword id="KW-0238">DNA-binding</keyword>
<keyword id="KW-1017">Isopeptide bond</keyword>
<keyword id="KW-0488">Methylation</keyword>
<keyword id="KW-0539">Nucleus</keyword>
<keyword id="KW-0597">Phosphoprotein</keyword>
<keyword id="KW-1185">Reference proteome</keyword>
<keyword id="KW-0832">Ubl conjugation</keyword>
<reference key="1">
    <citation type="submission" date="2005-08" db="EMBL/GenBank/DDBJ databases">
        <authorList>
            <consortium name="NIH - Mammalian Gene Collection (MGC) project"/>
        </authorList>
    </citation>
    <scope>NUCLEOTIDE SEQUENCE [LARGE SCALE MRNA]</scope>
    <source>
        <strain>Hereford</strain>
        <tissue>Fetal liver</tissue>
    </source>
</reference>
<name>PCNA_BOVIN</name>
<sequence length="261" mass="28749">MFEARLVQGSILKKVLEALKDLINEACWDISSSGVNLQSMDSSHVSLVQLTLRSEGFDTYRCDRNLAMGVNLTSMSKILKCAGNEDIITLRAEDNADTLALVFEAPNQEKVSDYEMKLMDLDVEQLGIPEQEYSCVVKMPSGEFARICRDLSHIGDAVVISCAKDGVKFSASGELGNGNIKLSQTSNVDKEEEAVAIEMNEPVQLTFALRYLNFFTKATPLSPTVTLSMSADVPLVVEYKIADMGHLKYYLAPKIEDEEGS</sequence>
<evidence type="ECO:0000250" key="1">
    <source>
        <dbReference type="UniProtKB" id="P04961"/>
    </source>
</evidence>
<evidence type="ECO:0000250" key="2">
    <source>
        <dbReference type="UniProtKB" id="P12004"/>
    </source>
</evidence>
<evidence type="ECO:0000250" key="3">
    <source>
        <dbReference type="UniProtKB" id="P17918"/>
    </source>
</evidence>
<evidence type="ECO:0000255" key="4"/>
<evidence type="ECO:0000305" key="5"/>
<organism>
    <name type="scientific">Bos taurus</name>
    <name type="common">Bovine</name>
    <dbReference type="NCBI Taxonomy" id="9913"/>
    <lineage>
        <taxon>Eukaryota</taxon>
        <taxon>Metazoa</taxon>
        <taxon>Chordata</taxon>
        <taxon>Craniata</taxon>
        <taxon>Vertebrata</taxon>
        <taxon>Euteleostomi</taxon>
        <taxon>Mammalia</taxon>
        <taxon>Eutheria</taxon>
        <taxon>Laurasiatheria</taxon>
        <taxon>Artiodactyla</taxon>
        <taxon>Ruminantia</taxon>
        <taxon>Pecora</taxon>
        <taxon>Bovidae</taxon>
        <taxon>Bovinae</taxon>
        <taxon>Bos</taxon>
    </lineage>
</organism>
<protein>
    <recommendedName>
        <fullName>Proliferating cell nuclear antigen</fullName>
        <shortName>PCNA</shortName>
    </recommendedName>
</protein>
<gene>
    <name type="primary">PCNA</name>
</gene>
<proteinExistence type="evidence at transcript level"/>
<dbReference type="EMBL" id="BC103068">
    <property type="protein sequence ID" value="AAI03069.1"/>
    <property type="molecule type" value="mRNA"/>
</dbReference>
<dbReference type="RefSeq" id="NP_001029666.1">
    <property type="nucleotide sequence ID" value="NM_001034494.1"/>
</dbReference>
<dbReference type="SMR" id="Q3ZBW4"/>
<dbReference type="BioGRID" id="172122">
    <property type="interactions" value="12"/>
</dbReference>
<dbReference type="CORUM" id="Q3ZBW4"/>
<dbReference type="FunCoup" id="Q3ZBW4">
    <property type="interactions" value="3952"/>
</dbReference>
<dbReference type="STRING" id="9913.ENSBTAP00000007967"/>
<dbReference type="PaxDb" id="9913-ENSBTAP00000007967"/>
<dbReference type="Ensembl" id="ENSBTAT00000007967.6">
    <property type="protein sequence ID" value="ENSBTAP00000007967.5"/>
    <property type="gene ID" value="ENSBTAG00000006065.6"/>
</dbReference>
<dbReference type="GeneID" id="515499"/>
<dbReference type="KEGG" id="bta:515499"/>
<dbReference type="CTD" id="5111"/>
<dbReference type="VEuPathDB" id="HostDB:ENSBTAG00000006065"/>
<dbReference type="VGNC" id="VGNC:32635">
    <property type="gene designation" value="PCNA"/>
</dbReference>
<dbReference type="eggNOG" id="KOG1636">
    <property type="taxonomic scope" value="Eukaryota"/>
</dbReference>
<dbReference type="GeneTree" id="ENSGT00390000004965"/>
<dbReference type="HOGENOM" id="CLU_043978_3_0_1"/>
<dbReference type="InParanoid" id="Q3ZBW4"/>
<dbReference type="OMA" id="EMKLINM"/>
<dbReference type="OrthoDB" id="534348at2759"/>
<dbReference type="TreeFam" id="TF313441"/>
<dbReference type="Reactome" id="R-BTA-110312">
    <property type="pathway name" value="Translesion synthesis by REV1"/>
</dbReference>
<dbReference type="Reactome" id="R-BTA-110314">
    <property type="pathway name" value="Recognition of DNA damage by PCNA-containing replication complex"/>
</dbReference>
<dbReference type="Reactome" id="R-BTA-110320">
    <property type="pathway name" value="Translesion Synthesis by POLH"/>
</dbReference>
<dbReference type="Reactome" id="R-BTA-174411">
    <property type="pathway name" value="Polymerase switching on the C-strand of the telomere"/>
</dbReference>
<dbReference type="Reactome" id="R-BTA-174414">
    <property type="pathway name" value="Processive synthesis on the C-strand of the telomere"/>
</dbReference>
<dbReference type="Reactome" id="R-BTA-174417">
    <property type="pathway name" value="Telomere C-strand (Lagging Strand) Synthesis"/>
</dbReference>
<dbReference type="Reactome" id="R-BTA-174437">
    <property type="pathway name" value="Removal of the Flap Intermediate from the C-strand"/>
</dbReference>
<dbReference type="Reactome" id="R-BTA-4615885">
    <property type="pathway name" value="SUMOylation of DNA replication proteins"/>
</dbReference>
<dbReference type="Reactome" id="R-BTA-5358565">
    <property type="pathway name" value="Mismatch repair (MMR) directed by MSH2:MSH6 (MutSalpha)"/>
</dbReference>
<dbReference type="Reactome" id="R-BTA-5651801">
    <property type="pathway name" value="PCNA-Dependent Long Patch Base Excision Repair"/>
</dbReference>
<dbReference type="Reactome" id="R-BTA-5655862">
    <property type="pathway name" value="Translesion synthesis by POLK"/>
</dbReference>
<dbReference type="Reactome" id="R-BTA-5656121">
    <property type="pathway name" value="Translesion synthesis by POLI"/>
</dbReference>
<dbReference type="Reactome" id="R-BTA-5656169">
    <property type="pathway name" value="Termination of translesion DNA synthesis"/>
</dbReference>
<dbReference type="Reactome" id="R-BTA-5685942">
    <property type="pathway name" value="HDR through Homologous Recombination (HRR)"/>
</dbReference>
<dbReference type="Reactome" id="R-BTA-5696397">
    <property type="pathway name" value="Gap-filling DNA repair synthesis and ligation in GG-NER"/>
</dbReference>
<dbReference type="Reactome" id="R-BTA-5696400">
    <property type="pathway name" value="Dual Incision in GG-NER"/>
</dbReference>
<dbReference type="Reactome" id="R-BTA-6782135">
    <property type="pathway name" value="Dual incision in TC-NER"/>
</dbReference>
<dbReference type="Reactome" id="R-BTA-6782210">
    <property type="pathway name" value="Gap-filling DNA repair synthesis and ligation in TC-NER"/>
</dbReference>
<dbReference type="Reactome" id="R-BTA-6804114">
    <property type="pathway name" value="TP53 Regulates Transcription of Genes Involved in G2 Cell Cycle Arrest"/>
</dbReference>
<dbReference type="Reactome" id="R-BTA-69091">
    <property type="pathway name" value="Polymerase switching"/>
</dbReference>
<dbReference type="Reactome" id="R-BTA-69166">
    <property type="pathway name" value="Removal of the Flap Intermediate"/>
</dbReference>
<dbReference type="Reactome" id="R-BTA-69183">
    <property type="pathway name" value="Processive synthesis on the lagging strand"/>
</dbReference>
<dbReference type="Reactome" id="R-BTA-8866654">
    <property type="pathway name" value="E3 ubiquitin ligases ubiquitinate target proteins"/>
</dbReference>
<dbReference type="Proteomes" id="UP000009136">
    <property type="component" value="Chromosome 13"/>
</dbReference>
<dbReference type="Bgee" id="ENSBTAG00000006065">
    <property type="expression patterns" value="Expressed in pharyngeal tonsil and 108 other cell types or tissues"/>
</dbReference>
<dbReference type="GO" id="GO:0005813">
    <property type="term" value="C:centrosome"/>
    <property type="evidence" value="ECO:0007669"/>
    <property type="project" value="Ensembl"/>
</dbReference>
<dbReference type="GO" id="GO:0000785">
    <property type="term" value="C:chromatin"/>
    <property type="evidence" value="ECO:0000250"/>
    <property type="project" value="UniProtKB"/>
</dbReference>
<dbReference type="GO" id="GO:0000307">
    <property type="term" value="C:cyclin-dependent protein kinase holoenzyme complex"/>
    <property type="evidence" value="ECO:0007669"/>
    <property type="project" value="Ensembl"/>
</dbReference>
<dbReference type="GO" id="GO:0001673">
    <property type="term" value="C:male germ cell nucleus"/>
    <property type="evidence" value="ECO:0007669"/>
    <property type="project" value="Ensembl"/>
</dbReference>
<dbReference type="GO" id="GO:0016604">
    <property type="term" value="C:nuclear body"/>
    <property type="evidence" value="ECO:0007669"/>
    <property type="project" value="Ensembl"/>
</dbReference>
<dbReference type="GO" id="GO:0005652">
    <property type="term" value="C:nuclear lamina"/>
    <property type="evidence" value="ECO:0007669"/>
    <property type="project" value="Ensembl"/>
</dbReference>
<dbReference type="GO" id="GO:0043596">
    <property type="term" value="C:nuclear replication fork"/>
    <property type="evidence" value="ECO:0007669"/>
    <property type="project" value="Ensembl"/>
</dbReference>
<dbReference type="GO" id="GO:0043626">
    <property type="term" value="C:PCNA complex"/>
    <property type="evidence" value="ECO:0000318"/>
    <property type="project" value="GO_Central"/>
</dbReference>
<dbReference type="GO" id="GO:0070557">
    <property type="term" value="C:PCNA-p21 complex"/>
    <property type="evidence" value="ECO:0000250"/>
    <property type="project" value="UniProtKB"/>
</dbReference>
<dbReference type="GO" id="GO:0003682">
    <property type="term" value="F:chromatin binding"/>
    <property type="evidence" value="ECO:0000250"/>
    <property type="project" value="UniProtKB"/>
</dbReference>
<dbReference type="GO" id="GO:0003684">
    <property type="term" value="F:damaged DNA binding"/>
    <property type="evidence" value="ECO:0007669"/>
    <property type="project" value="Ensembl"/>
</dbReference>
<dbReference type="GO" id="GO:0032139">
    <property type="term" value="F:dinucleotide insertion or deletion binding"/>
    <property type="evidence" value="ECO:0007669"/>
    <property type="project" value="Ensembl"/>
</dbReference>
<dbReference type="GO" id="GO:0070182">
    <property type="term" value="F:DNA polymerase binding"/>
    <property type="evidence" value="ECO:0007669"/>
    <property type="project" value="Ensembl"/>
</dbReference>
<dbReference type="GO" id="GO:0030337">
    <property type="term" value="F:DNA polymerase processivity factor activity"/>
    <property type="evidence" value="ECO:0000318"/>
    <property type="project" value="GO_Central"/>
</dbReference>
<dbReference type="GO" id="GO:0035035">
    <property type="term" value="F:histone acetyltransferase binding"/>
    <property type="evidence" value="ECO:0007669"/>
    <property type="project" value="Ensembl"/>
</dbReference>
<dbReference type="GO" id="GO:0042802">
    <property type="term" value="F:identical protein binding"/>
    <property type="evidence" value="ECO:0007669"/>
    <property type="project" value="Ensembl"/>
</dbReference>
<dbReference type="GO" id="GO:0032405">
    <property type="term" value="F:MutLalpha complex binding"/>
    <property type="evidence" value="ECO:0007669"/>
    <property type="project" value="Ensembl"/>
</dbReference>
<dbReference type="GO" id="GO:0000701">
    <property type="term" value="F:purine-specific mismatch base pair DNA N-glycosylase activity"/>
    <property type="evidence" value="ECO:0007669"/>
    <property type="project" value="Ensembl"/>
</dbReference>
<dbReference type="GO" id="GO:0030971">
    <property type="term" value="F:receptor tyrosine kinase binding"/>
    <property type="evidence" value="ECO:0007669"/>
    <property type="project" value="Ensembl"/>
</dbReference>
<dbReference type="GO" id="GO:0006287">
    <property type="term" value="P:base-excision repair, gap-filling"/>
    <property type="evidence" value="ECO:0007669"/>
    <property type="project" value="Ensembl"/>
</dbReference>
<dbReference type="GO" id="GO:0034644">
    <property type="term" value="P:cellular response to UV"/>
    <property type="evidence" value="ECO:0007669"/>
    <property type="project" value="Ensembl"/>
</dbReference>
<dbReference type="GO" id="GO:0071466">
    <property type="term" value="P:cellular response to xenobiotic stimulus"/>
    <property type="evidence" value="ECO:0007669"/>
    <property type="project" value="Ensembl"/>
</dbReference>
<dbReference type="GO" id="GO:0030855">
    <property type="term" value="P:epithelial cell differentiation"/>
    <property type="evidence" value="ECO:0007669"/>
    <property type="project" value="Ensembl"/>
</dbReference>
<dbReference type="GO" id="GO:0006272">
    <property type="term" value="P:leading strand elongation"/>
    <property type="evidence" value="ECO:0000318"/>
    <property type="project" value="GO_Central"/>
</dbReference>
<dbReference type="GO" id="GO:0006298">
    <property type="term" value="P:mismatch repair"/>
    <property type="evidence" value="ECO:0000318"/>
    <property type="project" value="GO_Central"/>
</dbReference>
<dbReference type="GO" id="GO:1902990">
    <property type="term" value="P:mitotic telomere maintenance via semi-conservative replication"/>
    <property type="evidence" value="ECO:0007669"/>
    <property type="project" value="Ensembl"/>
</dbReference>
<dbReference type="GO" id="GO:0000122">
    <property type="term" value="P:negative regulation of transcription by RNA polymerase II"/>
    <property type="evidence" value="ECO:0007669"/>
    <property type="project" value="Ensembl"/>
</dbReference>
<dbReference type="GO" id="GO:0032077">
    <property type="term" value="P:positive regulation of deoxyribonuclease activity"/>
    <property type="evidence" value="ECO:0000250"/>
    <property type="project" value="UniProtKB"/>
</dbReference>
<dbReference type="GO" id="GO:0045739">
    <property type="term" value="P:positive regulation of DNA repair"/>
    <property type="evidence" value="ECO:0007669"/>
    <property type="project" value="Ensembl"/>
</dbReference>
<dbReference type="GO" id="GO:0045740">
    <property type="term" value="P:positive regulation of DNA replication"/>
    <property type="evidence" value="ECO:0007669"/>
    <property type="project" value="Ensembl"/>
</dbReference>
<dbReference type="GO" id="GO:0031297">
    <property type="term" value="P:replication fork processing"/>
    <property type="evidence" value="ECO:0007669"/>
    <property type="project" value="Ensembl"/>
</dbReference>
<dbReference type="GO" id="GO:0019985">
    <property type="term" value="P:translesion synthesis"/>
    <property type="evidence" value="ECO:0000250"/>
    <property type="project" value="UniProtKB"/>
</dbReference>
<dbReference type="CDD" id="cd00577">
    <property type="entry name" value="PCNA"/>
    <property type="match status" value="1"/>
</dbReference>
<dbReference type="FunFam" id="3.70.10.10:FF:000001">
    <property type="entry name" value="Proliferating cell nuclear antigen"/>
    <property type="match status" value="1"/>
</dbReference>
<dbReference type="Gene3D" id="3.70.10.10">
    <property type="match status" value="1"/>
</dbReference>
<dbReference type="HAMAP" id="MF_00317">
    <property type="entry name" value="DNApol_clamp_arch"/>
    <property type="match status" value="1"/>
</dbReference>
<dbReference type="InterPro" id="IPR046938">
    <property type="entry name" value="DNA_clamp_sf"/>
</dbReference>
<dbReference type="InterPro" id="IPR000730">
    <property type="entry name" value="Pr_cel_nuc_antig"/>
</dbReference>
<dbReference type="InterPro" id="IPR022649">
    <property type="entry name" value="Pr_cel_nuc_antig_C"/>
</dbReference>
<dbReference type="InterPro" id="IPR022659">
    <property type="entry name" value="Pr_cel_nuc_antig_CS"/>
</dbReference>
<dbReference type="InterPro" id="IPR022648">
    <property type="entry name" value="Pr_cel_nuc_antig_N"/>
</dbReference>
<dbReference type="NCBIfam" id="TIGR00590">
    <property type="entry name" value="pcna"/>
    <property type="match status" value="1"/>
</dbReference>
<dbReference type="PANTHER" id="PTHR11352">
    <property type="entry name" value="PROLIFERATING CELL NUCLEAR ANTIGEN"/>
    <property type="match status" value="1"/>
</dbReference>
<dbReference type="PANTHER" id="PTHR11352:SF0">
    <property type="entry name" value="PROLIFERATING CELL NUCLEAR ANTIGEN"/>
    <property type="match status" value="1"/>
</dbReference>
<dbReference type="Pfam" id="PF02747">
    <property type="entry name" value="PCNA_C"/>
    <property type="match status" value="1"/>
</dbReference>
<dbReference type="Pfam" id="PF00705">
    <property type="entry name" value="PCNA_N"/>
    <property type="match status" value="1"/>
</dbReference>
<dbReference type="PRINTS" id="PR00339">
    <property type="entry name" value="PCNACYCLIN"/>
</dbReference>
<dbReference type="SUPFAM" id="SSF55979">
    <property type="entry name" value="DNA clamp"/>
    <property type="match status" value="2"/>
</dbReference>
<dbReference type="PROSITE" id="PS01251">
    <property type="entry name" value="PCNA_1"/>
    <property type="match status" value="1"/>
</dbReference>
<dbReference type="PROSITE" id="PS00293">
    <property type="entry name" value="PCNA_2"/>
    <property type="match status" value="1"/>
</dbReference>
<comment type="function">
    <text evidence="2">Auxiliary protein of DNA polymerase delta and epsilon, is involved in the control of eukaryotic DNA replication by increasing the polymerase's processibility during elongation of the leading strand. Induces a robust stimulatory effect on the 3'-5' exonuclease and 3'-phosphodiesterase, but not apurinic-apyrimidinic (AP) endonuclease, APEX2 activities. Has to be loaded onto DNA in order to be able to stimulate APEX2. Plays a key role in DNA damage response (DDR) by being conveniently positioned at the replication fork to coordinate DNA replication with DNA repair and DNA damage tolerance pathways. Acts as a loading platform to recruit DDR proteins that allow completion of DNA replication after DNA damage and promote postreplication repair: Monoubiquitinated PCNA leads to recruitment of translesion (TLS) polymerases, while 'Lys-63'-linked polyubiquitination of PCNA is involved in error-free pathway and employs recombination mechanisms to synthesize across the lesion (By similarity).</text>
</comment>
<comment type="subunit">
    <text evidence="1 2 3">Homotrimer. Interacts with p300/EP300; the interaction occurs on chromatin in UV-irradiated damaged cells. Interacts with CREBBP (via transactivation domain and C-terminus); the interaction occurs on chromatin in UV-irradiated damaged cells. Directly interacts with POLD1, POLD3 and POLD4 subunits of the DNA polymerase delta complex, POLD3 being the major interacting partner; the interaction with POLD3 is inhibited by CDKN1A/p21(CIP1). Forms a complex with activator 1 heteropentamer in the presence of ATP. Interacts with EXO1, POLH, POLK, DNMT1, ERCC5, FEN1, CDC6 and POLDIP2. Interacts with POLB (By similarity). Interacts with APEX2; this interaction is triggered by reactive oxygen species and increased by misincorporation of uracil in nuclear DNA. Forms a ternary complex with DNTTIP2 and core histone (By similarity). Interacts with KCTD10 and PPP1R15A (By similarity). Interacts with SMARCA5/SNF2H (By similarity). Interacts with BAZ1B/WSTF; the interaction is direct and is required for BAZ1B/WSTF binding to replication foci during S phase (By similarity). Interacts with HLTF and SHPRH. Interacts with NUDT15; this interaction is disrupted in response to UV irradiation and acetylation. Interacts with CDKN1A/p21(CIP1) and CDT1; interacts via their PIP-box which also recruits the DCX(DTL) complex. The interaction with CDKN1A inhibits POLD3 binding. Interacts with DDX11. Interacts with EGFR; positively regulates PCNA. Interacts with PARPBP. Interacts (when ubiquitinated) with SPRTN; leading to enhance RAD18-mediated PCNA ubiquitination. Interacts (when polyubiquitinated) with ZRANB3. Interacts with SMARCAD1. Interacts with CDKN1C. Interacts with PCLAF (via PIP-box). Interacts with RTEL1 (via PIP-box); the interaction is direct and essential for the suppression of telomere fragility. Interacts with FAM111A (via PIP-box); the interaction is direct and required for PCNA loading on chromatin binding. Interacts with LIG1. Interacts with SETMAR. Interacts with ANKRD17. Interacts with FBXO18/FBH1 (via PIP-box); the interaction recruits the DCX(DTL) complex and promotes ubiquitination and degradation of FBXO18/FBH1. Interacts with POLN (By similarity). Interacts with SDE2 (via PIP-box); the interaction is direct and prevents ultraviolet light induced monoubiquitination (By similarity). Component of the replisome complex composed of at least DONSON, MCM2, MCM7, PCNA and TICRR; interaction at least with PCNA occurs during DNA replication (By similarity). Interacts with MAPK15; the interaction is chromatin binding dependent and prevents MDM2-mediated PCNA destruction by inhibiting the association of PCNA with MDM2. Interacts with PARP10 (via PIP-box) (By similarity). Interacts with DDI2 (By similarity). Interacts with HMCES (via PIP-box) (By similarity). Interacts with TRAIP (via PIP-box) (By similarity). Interacts with UHRF2 (By similarity). Interacts with ALKBH2; this interaction is enhanced during the S-phase of the cell cycle. Interacts with ATAD5; the interaction promotes USP1-mediated PCNA deubiquitination (By similarity). Interacts (when phosphorylated) with GRB2 (By similarity). Interacts with nuclear UNG; this interaction mediates UNG recruitment to S-phase replication foci. Interacts with ERCC6L2 (via an atypical PIP-box); this interaction facilitates cenrtomeric localization of ERCC6L2 (By similarity).</text>
</comment>
<comment type="subcellular location">
    <subcellularLocation>
        <location evidence="2">Nucleus</location>
    </subcellularLocation>
    <text evidence="2">Forms nuclear foci representing sites of ongoing DNA replication and vary in morphology and number during S phase. Together with APEX2, is redistributed in discrete nuclear foci in presence of oxidative DNA damaging agents. Colocalizes with CREBBP, EP300 and POLD1 to sites of DNA damage (By similarity).</text>
</comment>
<comment type="PTM">
    <text evidence="2">Phosphorylated. Phosphorylation at Tyr-211 by EGFR stabilizes chromatin-associated PCNA (By similarity).</text>
</comment>
<comment type="PTM">
    <text evidence="2">Acetylated by CREBBP and p300/EP300; preferentially acetylated by CREBBP on Lys-80, Lys-13 and Lys-14 and on Lys-77 by p300/EP300 upon loading on chromatin in response to UV irradiation. Lysine acetylation disrupts association with chromatin, hence promoting PCNA ubiquitination and proteasomal degradation in response to UV damage in a CREBBP- and EP300-dependent manner. Acetylation disrupts interaction with NUDT15 and promotes degradation (By similarity).</text>
</comment>
<comment type="PTM">
    <text evidence="2">Ubiquitinated. Following DNA damage, can be either monoubiquitinated to stimulate direct bypass of DNA lesions by specialized DNA polymerases or polyubiquitinated to promote recombination-dependent DNA synthesis across DNA lesions by template switching mechanisms. Following induction of replication stress, monoubiquitinated by the UBE2B-RAD18 complex on Lys-164, leading to recruit translesion (TLS) polymerases, which are able to synthesize across DNA lesions in a potentially error-prone manner. An error-free pathway also exists and requires non-canonical polyubiquitination on Lys-164 through 'Lys-63' linkage of ubiquitin moieties by the E2 complex UBE2N-UBE2V2 and the E3 ligases, HLTF, RNF8 and SHPRH. This error-free pathway, also known as template switching, employs recombination mechanisms to synthesize across the lesion, using as a template the undamaged, newly synthesized strand of the sister chromatid. Monoubiquitination at Lys-164 also takes place in undamaged proliferating cells, and is mediated by the DCX(DTL) complex, leading to enhance PCNA-dependent translesion DNA synthesis. Sumoylated during S phase (By similarity).</text>
</comment>
<comment type="PTM">
    <text evidence="2">Methylated on glutamate residues by ARMT1.</text>
</comment>
<comment type="similarity">
    <text evidence="5">Belongs to the PCNA family.</text>
</comment>